<comment type="function">
    <text evidence="1">Catalyzes the attachment of alanine to tRNA(Ala) in a two-step reaction: alanine is first activated by ATP to form Ala-AMP and then transferred to the acceptor end of tRNA(Ala). Also edits incorrectly charged Ser-tRNA(Ala) and Gly-tRNA(Ala) via its editing domain.</text>
</comment>
<comment type="catalytic activity">
    <reaction evidence="1">
        <text>tRNA(Ala) + L-alanine + ATP = L-alanyl-tRNA(Ala) + AMP + diphosphate</text>
        <dbReference type="Rhea" id="RHEA:12540"/>
        <dbReference type="Rhea" id="RHEA-COMP:9657"/>
        <dbReference type="Rhea" id="RHEA-COMP:9923"/>
        <dbReference type="ChEBI" id="CHEBI:30616"/>
        <dbReference type="ChEBI" id="CHEBI:33019"/>
        <dbReference type="ChEBI" id="CHEBI:57972"/>
        <dbReference type="ChEBI" id="CHEBI:78442"/>
        <dbReference type="ChEBI" id="CHEBI:78497"/>
        <dbReference type="ChEBI" id="CHEBI:456215"/>
        <dbReference type="EC" id="6.1.1.7"/>
    </reaction>
</comment>
<comment type="cofactor">
    <cofactor evidence="1">
        <name>Zn(2+)</name>
        <dbReference type="ChEBI" id="CHEBI:29105"/>
    </cofactor>
    <text evidence="1">Binds 1 zinc ion per subunit.</text>
</comment>
<comment type="subcellular location">
    <subcellularLocation>
        <location evidence="1">Cytoplasm</location>
    </subcellularLocation>
</comment>
<comment type="domain">
    <text evidence="1">Consists of three domains; the N-terminal catalytic domain, the editing domain and the C-terminal C-Ala domain. The editing domain removes incorrectly charged amino acids, while the C-Ala domain, along with tRNA(Ala), serves as a bridge to cooperatively bring together the editing and aminoacylation centers thus stimulating deacylation of misacylated tRNAs.</text>
</comment>
<comment type="similarity">
    <text evidence="1">Belongs to the class-II aminoacyl-tRNA synthetase family.</text>
</comment>
<organism>
    <name type="scientific">Mycoplasmopsis synoviae (strain 53)</name>
    <name type="common">Mycoplasma synoviae</name>
    <dbReference type="NCBI Taxonomy" id="262723"/>
    <lineage>
        <taxon>Bacteria</taxon>
        <taxon>Bacillati</taxon>
        <taxon>Mycoplasmatota</taxon>
        <taxon>Mycoplasmoidales</taxon>
        <taxon>Metamycoplasmataceae</taxon>
        <taxon>Mycoplasmopsis</taxon>
    </lineage>
</organism>
<name>SYA_MYCS5</name>
<dbReference type="EC" id="6.1.1.7" evidence="1"/>
<dbReference type="EMBL" id="AE017245">
    <property type="protein sequence ID" value="AAZ43788.1"/>
    <property type="molecule type" value="Genomic_DNA"/>
</dbReference>
<dbReference type="RefSeq" id="WP_011283519.1">
    <property type="nucleotide sequence ID" value="NC_007294.1"/>
</dbReference>
<dbReference type="SMR" id="Q4A633"/>
<dbReference type="STRING" id="262723.MS53_0376"/>
<dbReference type="KEGG" id="msy:MS53_0376"/>
<dbReference type="eggNOG" id="COG0013">
    <property type="taxonomic scope" value="Bacteria"/>
</dbReference>
<dbReference type="HOGENOM" id="CLU_004485_1_1_14"/>
<dbReference type="OrthoDB" id="9803884at2"/>
<dbReference type="Proteomes" id="UP000000549">
    <property type="component" value="Chromosome"/>
</dbReference>
<dbReference type="GO" id="GO:0005829">
    <property type="term" value="C:cytosol"/>
    <property type="evidence" value="ECO:0007669"/>
    <property type="project" value="TreeGrafter"/>
</dbReference>
<dbReference type="GO" id="GO:0004813">
    <property type="term" value="F:alanine-tRNA ligase activity"/>
    <property type="evidence" value="ECO:0007669"/>
    <property type="project" value="UniProtKB-UniRule"/>
</dbReference>
<dbReference type="GO" id="GO:0002161">
    <property type="term" value="F:aminoacyl-tRNA deacylase activity"/>
    <property type="evidence" value="ECO:0007669"/>
    <property type="project" value="TreeGrafter"/>
</dbReference>
<dbReference type="GO" id="GO:0005524">
    <property type="term" value="F:ATP binding"/>
    <property type="evidence" value="ECO:0007669"/>
    <property type="project" value="UniProtKB-UniRule"/>
</dbReference>
<dbReference type="GO" id="GO:0000049">
    <property type="term" value="F:tRNA binding"/>
    <property type="evidence" value="ECO:0007669"/>
    <property type="project" value="UniProtKB-KW"/>
</dbReference>
<dbReference type="GO" id="GO:0008270">
    <property type="term" value="F:zinc ion binding"/>
    <property type="evidence" value="ECO:0007669"/>
    <property type="project" value="UniProtKB-UniRule"/>
</dbReference>
<dbReference type="GO" id="GO:0006419">
    <property type="term" value="P:alanyl-tRNA aminoacylation"/>
    <property type="evidence" value="ECO:0007669"/>
    <property type="project" value="UniProtKB-UniRule"/>
</dbReference>
<dbReference type="CDD" id="cd00673">
    <property type="entry name" value="AlaRS_core"/>
    <property type="match status" value="1"/>
</dbReference>
<dbReference type="FunFam" id="3.30.930.10:FF:000046">
    <property type="entry name" value="Alanine--tRNA ligase"/>
    <property type="match status" value="1"/>
</dbReference>
<dbReference type="FunFam" id="3.30.980.10:FF:000004">
    <property type="entry name" value="Alanine--tRNA ligase, cytoplasmic"/>
    <property type="match status" value="1"/>
</dbReference>
<dbReference type="Gene3D" id="2.40.30.130">
    <property type="match status" value="1"/>
</dbReference>
<dbReference type="Gene3D" id="3.10.310.40">
    <property type="match status" value="1"/>
</dbReference>
<dbReference type="Gene3D" id="3.30.930.10">
    <property type="entry name" value="Bira Bifunctional Protein, Domain 2"/>
    <property type="match status" value="1"/>
</dbReference>
<dbReference type="Gene3D" id="3.30.980.10">
    <property type="entry name" value="Threonyl-trna Synthetase, Chain A, domain 2"/>
    <property type="match status" value="1"/>
</dbReference>
<dbReference type="HAMAP" id="MF_00036_B">
    <property type="entry name" value="Ala_tRNA_synth_B"/>
    <property type="match status" value="1"/>
</dbReference>
<dbReference type="InterPro" id="IPR045864">
    <property type="entry name" value="aa-tRNA-synth_II/BPL/LPL"/>
</dbReference>
<dbReference type="InterPro" id="IPR002318">
    <property type="entry name" value="Ala-tRNA-lgiase_IIc"/>
</dbReference>
<dbReference type="InterPro" id="IPR018162">
    <property type="entry name" value="Ala-tRNA-ligase_IIc_anticod-bd"/>
</dbReference>
<dbReference type="InterPro" id="IPR018165">
    <property type="entry name" value="Ala-tRNA-synth_IIc_core"/>
</dbReference>
<dbReference type="InterPro" id="IPR018164">
    <property type="entry name" value="Ala-tRNA-synth_IIc_N"/>
</dbReference>
<dbReference type="InterPro" id="IPR050058">
    <property type="entry name" value="Ala-tRNA_ligase"/>
</dbReference>
<dbReference type="InterPro" id="IPR023033">
    <property type="entry name" value="Ala_tRNA_ligase_euk/bac"/>
</dbReference>
<dbReference type="InterPro" id="IPR003156">
    <property type="entry name" value="DHHA1_dom"/>
</dbReference>
<dbReference type="InterPro" id="IPR018163">
    <property type="entry name" value="Thr/Ala-tRNA-synth_IIc_edit"/>
</dbReference>
<dbReference type="InterPro" id="IPR009000">
    <property type="entry name" value="Transl_B-barrel_sf"/>
</dbReference>
<dbReference type="InterPro" id="IPR012947">
    <property type="entry name" value="tRNA_SAD"/>
</dbReference>
<dbReference type="NCBIfam" id="TIGR00344">
    <property type="entry name" value="alaS"/>
    <property type="match status" value="1"/>
</dbReference>
<dbReference type="PANTHER" id="PTHR11777:SF9">
    <property type="entry name" value="ALANINE--TRNA LIGASE, CYTOPLASMIC"/>
    <property type="match status" value="1"/>
</dbReference>
<dbReference type="PANTHER" id="PTHR11777">
    <property type="entry name" value="ALANYL-TRNA SYNTHETASE"/>
    <property type="match status" value="1"/>
</dbReference>
<dbReference type="Pfam" id="PF02272">
    <property type="entry name" value="DHHA1"/>
    <property type="match status" value="1"/>
</dbReference>
<dbReference type="Pfam" id="PF01411">
    <property type="entry name" value="tRNA-synt_2c"/>
    <property type="match status" value="1"/>
</dbReference>
<dbReference type="Pfam" id="PF07973">
    <property type="entry name" value="tRNA_SAD"/>
    <property type="match status" value="1"/>
</dbReference>
<dbReference type="PRINTS" id="PR00980">
    <property type="entry name" value="TRNASYNTHALA"/>
</dbReference>
<dbReference type="SMART" id="SM00863">
    <property type="entry name" value="tRNA_SAD"/>
    <property type="match status" value="1"/>
</dbReference>
<dbReference type="SUPFAM" id="SSF55681">
    <property type="entry name" value="Class II aaRS and biotin synthetases"/>
    <property type="match status" value="1"/>
</dbReference>
<dbReference type="SUPFAM" id="SSF101353">
    <property type="entry name" value="Putative anticodon-binding domain of alanyl-tRNA synthetase (AlaRS)"/>
    <property type="match status" value="1"/>
</dbReference>
<dbReference type="SUPFAM" id="SSF55186">
    <property type="entry name" value="ThrRS/AlaRS common domain"/>
    <property type="match status" value="1"/>
</dbReference>
<dbReference type="SUPFAM" id="SSF50447">
    <property type="entry name" value="Translation proteins"/>
    <property type="match status" value="1"/>
</dbReference>
<dbReference type="PROSITE" id="PS50860">
    <property type="entry name" value="AA_TRNA_LIGASE_II_ALA"/>
    <property type="match status" value="1"/>
</dbReference>
<gene>
    <name evidence="1" type="primary">alaS</name>
    <name type="ordered locus">MS53_0376</name>
</gene>
<keyword id="KW-0030">Aminoacyl-tRNA synthetase</keyword>
<keyword id="KW-0067">ATP-binding</keyword>
<keyword id="KW-0963">Cytoplasm</keyword>
<keyword id="KW-0436">Ligase</keyword>
<keyword id="KW-0479">Metal-binding</keyword>
<keyword id="KW-0547">Nucleotide-binding</keyword>
<keyword id="KW-0648">Protein biosynthesis</keyword>
<keyword id="KW-1185">Reference proteome</keyword>
<keyword id="KW-0694">RNA-binding</keyword>
<keyword id="KW-0820">tRNA-binding</keyword>
<keyword id="KW-0862">Zinc</keyword>
<feature type="chain" id="PRO_0000075158" description="Alanine--tRNA ligase">
    <location>
        <begin position="1"/>
        <end position="878"/>
    </location>
</feature>
<feature type="binding site" evidence="1">
    <location>
        <position position="558"/>
    </location>
    <ligand>
        <name>Zn(2+)</name>
        <dbReference type="ChEBI" id="CHEBI:29105"/>
    </ligand>
</feature>
<feature type="binding site" evidence="1">
    <location>
        <position position="562"/>
    </location>
    <ligand>
        <name>Zn(2+)</name>
        <dbReference type="ChEBI" id="CHEBI:29105"/>
    </ligand>
</feature>
<feature type="binding site" evidence="1">
    <location>
        <position position="663"/>
    </location>
    <ligand>
        <name>Zn(2+)</name>
        <dbReference type="ChEBI" id="CHEBI:29105"/>
    </ligand>
</feature>
<feature type="binding site" evidence="1">
    <location>
        <position position="667"/>
    </location>
    <ligand>
        <name>Zn(2+)</name>
        <dbReference type="ChEBI" id="CHEBI:29105"/>
    </ligand>
</feature>
<accession>Q4A633</accession>
<proteinExistence type="inferred from homology"/>
<reference key="1">
    <citation type="journal article" date="2005" name="J. Bacteriol.">
        <title>Swine and poultry pathogens: the complete genome sequences of two strains of Mycoplasma hyopneumoniae and a strain of Mycoplasma synoviae.</title>
        <authorList>
            <person name="Vasconcelos A.T.R."/>
            <person name="Ferreira H.B."/>
            <person name="Bizarro C.V."/>
            <person name="Bonatto S.L."/>
            <person name="Carvalho M.O."/>
            <person name="Pinto P.M."/>
            <person name="Almeida D.F."/>
            <person name="Almeida L.G.P."/>
            <person name="Almeida R."/>
            <person name="Alves-Junior L."/>
            <person name="Assuncao E.N."/>
            <person name="Azevedo V.A.C."/>
            <person name="Bogo M.R."/>
            <person name="Brigido M.M."/>
            <person name="Brocchi M."/>
            <person name="Burity H.A."/>
            <person name="Camargo A.A."/>
            <person name="Camargo S.S."/>
            <person name="Carepo M.S."/>
            <person name="Carraro D.M."/>
            <person name="de Mattos Cascardo J.C."/>
            <person name="Castro L.A."/>
            <person name="Cavalcanti G."/>
            <person name="Chemale G."/>
            <person name="Collevatti R.G."/>
            <person name="Cunha C.W."/>
            <person name="Dallagiovanna B."/>
            <person name="Dambros B.P."/>
            <person name="Dellagostin O.A."/>
            <person name="Falcao C."/>
            <person name="Fantinatti-Garboggini F."/>
            <person name="Felipe M.S.S."/>
            <person name="Fiorentin L."/>
            <person name="Franco G.R."/>
            <person name="Freitas N.S.A."/>
            <person name="Frias D."/>
            <person name="Grangeiro T.B."/>
            <person name="Grisard E.C."/>
            <person name="Guimaraes C.T."/>
            <person name="Hungria M."/>
            <person name="Jardim S.N."/>
            <person name="Krieger M.A."/>
            <person name="Laurino J.P."/>
            <person name="Lima L.F.A."/>
            <person name="Lopes M.I."/>
            <person name="Loreto E.L.S."/>
            <person name="Madeira H.M.F."/>
            <person name="Manfio G.P."/>
            <person name="Maranhao A.Q."/>
            <person name="Martinkovics C.T."/>
            <person name="Medeiros S.R.B."/>
            <person name="Moreira M.A.M."/>
            <person name="Neiva M."/>
            <person name="Ramalho-Neto C.E."/>
            <person name="Nicolas M.F."/>
            <person name="Oliveira S.C."/>
            <person name="Paixao R.F.C."/>
            <person name="Pedrosa F.O."/>
            <person name="Pena S.D.J."/>
            <person name="Pereira M."/>
            <person name="Pereira-Ferrari L."/>
            <person name="Piffer I."/>
            <person name="Pinto L.S."/>
            <person name="Potrich D.P."/>
            <person name="Salim A.C.M."/>
            <person name="Santos F.R."/>
            <person name="Schmitt R."/>
            <person name="Schneider M.P.C."/>
            <person name="Schrank A."/>
            <person name="Schrank I.S."/>
            <person name="Schuck A.F."/>
            <person name="Seuanez H.N."/>
            <person name="Silva D.W."/>
            <person name="Silva R."/>
            <person name="Silva S.C."/>
            <person name="Soares C.M.A."/>
            <person name="Souza K.R.L."/>
            <person name="Souza R.C."/>
            <person name="Staats C.C."/>
            <person name="Steffens M.B.R."/>
            <person name="Teixeira S.M.R."/>
            <person name="Urmenyi T.P."/>
            <person name="Vainstein M.H."/>
            <person name="Zuccherato L.W."/>
            <person name="Simpson A.J.G."/>
            <person name="Zaha A."/>
        </authorList>
    </citation>
    <scope>NUCLEOTIDE SEQUENCE [LARGE SCALE GENOMIC DNA]</scope>
    <source>
        <strain>53</strain>
    </source>
</reference>
<sequence length="878" mass="101183">MNSKEIRKAWLDFFESKNHFIVPPKSLIPVNDNSLLWINSGVATLKDYFSGKKNPPSKRMANSQKSIRTNDIENVGITARHHTFFEMLGNFSIGGYFKKEAIEFATEFVLDVLKLDRSRLYFTYFHDDLETKNLWISQGFKEEQLIPGDRKTNFWEVGKGPCGPNTEIFYDRGEKYDQRGIELLKNDIENDRYIEIWNIVFSTYNSDGEGNYTELNQKNIDTGAGLERIVSILQDAPTNFDTDLFLPIIHEIEKYTSYRYKIENYFIKDKAQKEINSYFKIIADHMRTVVNAIADGEKPSNLSRGYILRRLIRRSYYKAIQLKITKSPFLYKLVDVIKASLPFEYDSKKVAEVIKEEEVLFSQTISKGKEILEKFISENSSKDLFPGDLAYKLHETYGFPFELTEEILLQKDIKINKEEFNLAKEKHIEASRNQKETGMDKVINSLALIKAKEDEFIGYEHTNSVSKILHLLNEENELSENDGTSYLILDKTPFYATSGGQKHDRGYIEQNGVKLEILNVFKDKFGNHVHKVVGKLSKNYPVTCQVDLKIRRGLERNHSGTHLMFCALRNVFGNQIKQLGSDNNEDRLTFDAPFDSKPTNEEILKVENLVKSYIQKEVDRQYLIMGIDQAKEINAIMTLEEAEYMDSSKLRIVNFNGITADLCGGTHLENTKLLEDFKITSVEKKAAGVYRIRAISSKETIEKYLENQKQELMQELLVLVKKLKDMQFDFKVSLDESLELSSQIQEIKNLTNLASEAIKNKIKENSKKISIDLNEIELENINGNYLYLNDEISKEEIKNLSGVIREKFPNALVILISKGEAQSAISFASKKYNSINVLKELANHFELRGGGNAILAMGSIKDYSQLKTFLKEKYKWEN</sequence>
<protein>
    <recommendedName>
        <fullName evidence="1">Alanine--tRNA ligase</fullName>
        <ecNumber evidence="1">6.1.1.7</ecNumber>
    </recommendedName>
    <alternativeName>
        <fullName evidence="1">Alanyl-tRNA synthetase</fullName>
        <shortName evidence="1">AlaRS</shortName>
    </alternativeName>
</protein>
<evidence type="ECO:0000255" key="1">
    <source>
        <dbReference type="HAMAP-Rule" id="MF_00036"/>
    </source>
</evidence>